<sequence length="186" mass="20680">MIEASKLRAGMTFVTNDGKLLKVLEASHHKPGKGNTIMRMKLRDVRSGSTFDTSYRPEEKFEQAIIETVPAQYLYQMDDTAYFMNTETYDQYEIPVVNVQEELKFILENSDVKIQFYGTEVIGVQVPTTVELTVTETQPSIKGATVTGSGKPATLETGLVVNVPDFIEAGQKLVINTVEGTYVSRA</sequence>
<dbReference type="EMBL" id="CP000419">
    <property type="protein sequence ID" value="ABJ66858.1"/>
    <property type="molecule type" value="Genomic_DNA"/>
</dbReference>
<dbReference type="RefSeq" id="WP_011227545.1">
    <property type="nucleotide sequence ID" value="NC_008532.1"/>
</dbReference>
<dbReference type="SMR" id="Q03IW4"/>
<dbReference type="KEGG" id="ste:STER_1715"/>
<dbReference type="HOGENOM" id="CLU_074944_3_0_9"/>
<dbReference type="UniPathway" id="UPA00345"/>
<dbReference type="GO" id="GO:0005737">
    <property type="term" value="C:cytoplasm"/>
    <property type="evidence" value="ECO:0007669"/>
    <property type="project" value="UniProtKB-SubCell"/>
</dbReference>
<dbReference type="GO" id="GO:0003746">
    <property type="term" value="F:translation elongation factor activity"/>
    <property type="evidence" value="ECO:0007669"/>
    <property type="project" value="UniProtKB-UniRule"/>
</dbReference>
<dbReference type="GO" id="GO:0043043">
    <property type="term" value="P:peptide biosynthetic process"/>
    <property type="evidence" value="ECO:0007669"/>
    <property type="project" value="InterPro"/>
</dbReference>
<dbReference type="CDD" id="cd04470">
    <property type="entry name" value="S1_EF-P_repeat_1"/>
    <property type="match status" value="1"/>
</dbReference>
<dbReference type="CDD" id="cd05794">
    <property type="entry name" value="S1_EF-P_repeat_2"/>
    <property type="match status" value="1"/>
</dbReference>
<dbReference type="FunFam" id="2.30.30.30:FF:000003">
    <property type="entry name" value="Elongation factor P"/>
    <property type="match status" value="1"/>
</dbReference>
<dbReference type="FunFam" id="2.40.50.140:FF:000004">
    <property type="entry name" value="Elongation factor P"/>
    <property type="match status" value="1"/>
</dbReference>
<dbReference type="FunFam" id="2.40.50.140:FF:000009">
    <property type="entry name" value="Elongation factor P"/>
    <property type="match status" value="1"/>
</dbReference>
<dbReference type="Gene3D" id="2.30.30.30">
    <property type="match status" value="1"/>
</dbReference>
<dbReference type="Gene3D" id="2.40.50.140">
    <property type="entry name" value="Nucleic acid-binding proteins"/>
    <property type="match status" value="2"/>
</dbReference>
<dbReference type="HAMAP" id="MF_00141">
    <property type="entry name" value="EF_P"/>
    <property type="match status" value="1"/>
</dbReference>
<dbReference type="InterPro" id="IPR015365">
    <property type="entry name" value="Elong-fact-P_C"/>
</dbReference>
<dbReference type="InterPro" id="IPR012340">
    <property type="entry name" value="NA-bd_OB-fold"/>
</dbReference>
<dbReference type="InterPro" id="IPR014722">
    <property type="entry name" value="Rib_uL2_dom2"/>
</dbReference>
<dbReference type="InterPro" id="IPR020599">
    <property type="entry name" value="Transl_elong_fac_P/YeiP"/>
</dbReference>
<dbReference type="InterPro" id="IPR013185">
    <property type="entry name" value="Transl_elong_KOW-like"/>
</dbReference>
<dbReference type="InterPro" id="IPR001059">
    <property type="entry name" value="Transl_elong_P/YeiP_cen"/>
</dbReference>
<dbReference type="InterPro" id="IPR013852">
    <property type="entry name" value="Transl_elong_P/YeiP_CS"/>
</dbReference>
<dbReference type="InterPro" id="IPR011768">
    <property type="entry name" value="Transl_elongation_fac_P"/>
</dbReference>
<dbReference type="InterPro" id="IPR008991">
    <property type="entry name" value="Translation_prot_SH3-like_sf"/>
</dbReference>
<dbReference type="NCBIfam" id="TIGR00038">
    <property type="entry name" value="efp"/>
    <property type="match status" value="1"/>
</dbReference>
<dbReference type="NCBIfam" id="NF001810">
    <property type="entry name" value="PRK00529.1"/>
    <property type="match status" value="1"/>
</dbReference>
<dbReference type="PANTHER" id="PTHR30053">
    <property type="entry name" value="ELONGATION FACTOR P"/>
    <property type="match status" value="1"/>
</dbReference>
<dbReference type="PANTHER" id="PTHR30053:SF12">
    <property type="entry name" value="ELONGATION FACTOR P (EF-P) FAMILY PROTEIN"/>
    <property type="match status" value="1"/>
</dbReference>
<dbReference type="Pfam" id="PF01132">
    <property type="entry name" value="EFP"/>
    <property type="match status" value="1"/>
</dbReference>
<dbReference type="Pfam" id="PF08207">
    <property type="entry name" value="EFP_N"/>
    <property type="match status" value="1"/>
</dbReference>
<dbReference type="Pfam" id="PF09285">
    <property type="entry name" value="Elong-fact-P_C"/>
    <property type="match status" value="1"/>
</dbReference>
<dbReference type="PIRSF" id="PIRSF005901">
    <property type="entry name" value="EF-P"/>
    <property type="match status" value="1"/>
</dbReference>
<dbReference type="SMART" id="SM01185">
    <property type="entry name" value="EFP"/>
    <property type="match status" value="1"/>
</dbReference>
<dbReference type="SMART" id="SM00841">
    <property type="entry name" value="Elong-fact-P_C"/>
    <property type="match status" value="1"/>
</dbReference>
<dbReference type="SUPFAM" id="SSF50249">
    <property type="entry name" value="Nucleic acid-binding proteins"/>
    <property type="match status" value="2"/>
</dbReference>
<dbReference type="SUPFAM" id="SSF50104">
    <property type="entry name" value="Translation proteins SH3-like domain"/>
    <property type="match status" value="1"/>
</dbReference>
<dbReference type="PROSITE" id="PS01275">
    <property type="entry name" value="EFP"/>
    <property type="match status" value="1"/>
</dbReference>
<comment type="function">
    <text evidence="1">Involved in peptide bond synthesis. Stimulates efficient translation and peptide-bond synthesis on native or reconstituted 70S ribosomes in vitro. Probably functions indirectly by altering the affinity of the ribosome for aminoacyl-tRNA, thus increasing their reactivity as acceptors for peptidyl transferase.</text>
</comment>
<comment type="pathway">
    <text evidence="1">Protein biosynthesis; polypeptide chain elongation.</text>
</comment>
<comment type="subcellular location">
    <subcellularLocation>
        <location evidence="1">Cytoplasm</location>
    </subcellularLocation>
</comment>
<comment type="similarity">
    <text evidence="1">Belongs to the elongation factor P family.</text>
</comment>
<keyword id="KW-0963">Cytoplasm</keyword>
<keyword id="KW-0251">Elongation factor</keyword>
<keyword id="KW-0648">Protein biosynthesis</keyword>
<protein>
    <recommendedName>
        <fullName evidence="1">Elongation factor P</fullName>
        <shortName evidence="1">EF-P</shortName>
    </recommendedName>
</protein>
<gene>
    <name evidence="1" type="primary">efp</name>
    <name type="ordered locus">STER_1715</name>
</gene>
<proteinExistence type="inferred from homology"/>
<reference key="1">
    <citation type="journal article" date="2006" name="Proc. Natl. Acad. Sci. U.S.A.">
        <title>Comparative genomics of the lactic acid bacteria.</title>
        <authorList>
            <person name="Makarova K.S."/>
            <person name="Slesarev A."/>
            <person name="Wolf Y.I."/>
            <person name="Sorokin A."/>
            <person name="Mirkin B."/>
            <person name="Koonin E.V."/>
            <person name="Pavlov A."/>
            <person name="Pavlova N."/>
            <person name="Karamychev V."/>
            <person name="Polouchine N."/>
            <person name="Shakhova V."/>
            <person name="Grigoriev I."/>
            <person name="Lou Y."/>
            <person name="Rohksar D."/>
            <person name="Lucas S."/>
            <person name="Huang K."/>
            <person name="Goodstein D.M."/>
            <person name="Hawkins T."/>
            <person name="Plengvidhya V."/>
            <person name="Welker D."/>
            <person name="Hughes J."/>
            <person name="Goh Y."/>
            <person name="Benson A."/>
            <person name="Baldwin K."/>
            <person name="Lee J.-H."/>
            <person name="Diaz-Muniz I."/>
            <person name="Dosti B."/>
            <person name="Smeianov V."/>
            <person name="Wechter W."/>
            <person name="Barabote R."/>
            <person name="Lorca G."/>
            <person name="Altermann E."/>
            <person name="Barrangou R."/>
            <person name="Ganesan B."/>
            <person name="Xie Y."/>
            <person name="Rawsthorne H."/>
            <person name="Tamir D."/>
            <person name="Parker C."/>
            <person name="Breidt F."/>
            <person name="Broadbent J.R."/>
            <person name="Hutkins R."/>
            <person name="O'Sullivan D."/>
            <person name="Steele J."/>
            <person name="Unlu G."/>
            <person name="Saier M.H. Jr."/>
            <person name="Klaenhammer T."/>
            <person name="Richardson P."/>
            <person name="Kozyavkin S."/>
            <person name="Weimer B.C."/>
            <person name="Mills D.A."/>
        </authorList>
    </citation>
    <scope>NUCLEOTIDE SEQUENCE [LARGE SCALE GENOMIC DNA]</scope>
    <source>
        <strain>ATCC BAA-491 / LMD-9</strain>
    </source>
</reference>
<accession>Q03IW4</accession>
<evidence type="ECO:0000255" key="1">
    <source>
        <dbReference type="HAMAP-Rule" id="MF_00141"/>
    </source>
</evidence>
<feature type="chain" id="PRO_1000010879" description="Elongation factor P">
    <location>
        <begin position="1"/>
        <end position="186"/>
    </location>
</feature>
<organism>
    <name type="scientific">Streptococcus thermophilus (strain ATCC BAA-491 / LMD-9)</name>
    <dbReference type="NCBI Taxonomy" id="322159"/>
    <lineage>
        <taxon>Bacteria</taxon>
        <taxon>Bacillati</taxon>
        <taxon>Bacillota</taxon>
        <taxon>Bacilli</taxon>
        <taxon>Lactobacillales</taxon>
        <taxon>Streptococcaceae</taxon>
        <taxon>Streptococcus</taxon>
    </lineage>
</organism>
<name>EFP_STRTD</name>